<sequence length="68" mass="7237">MSQEILNVEGMSCGHCKSAVESALNNIDGVTSADVNLENGQVSVQYDDSKVAVSQMKDAIEDQGYDVV</sequence>
<accession>A8Z3F9</accession>
<dbReference type="EMBL" id="CP000730">
    <property type="protein sequence ID" value="ABX30539.1"/>
    <property type="molecule type" value="Genomic_DNA"/>
</dbReference>
<dbReference type="RefSeq" id="WP_000076661.1">
    <property type="nucleotide sequence ID" value="NC_010079.1"/>
</dbReference>
<dbReference type="SMR" id="A8Z3F9"/>
<dbReference type="KEGG" id="sax:USA300HOU_2553"/>
<dbReference type="HOGENOM" id="CLU_134973_10_4_9"/>
<dbReference type="GO" id="GO:0005737">
    <property type="term" value="C:cytoplasm"/>
    <property type="evidence" value="ECO:0007669"/>
    <property type="project" value="UniProtKB-SubCell"/>
</dbReference>
<dbReference type="GO" id="GO:0005507">
    <property type="term" value="F:copper ion binding"/>
    <property type="evidence" value="ECO:0007669"/>
    <property type="project" value="InterPro"/>
</dbReference>
<dbReference type="CDD" id="cd00371">
    <property type="entry name" value="HMA"/>
    <property type="match status" value="1"/>
</dbReference>
<dbReference type="FunFam" id="3.30.70.100:FF:000005">
    <property type="entry name" value="Copper-exporting P-type ATPase A"/>
    <property type="match status" value="1"/>
</dbReference>
<dbReference type="Gene3D" id="3.30.70.100">
    <property type="match status" value="1"/>
</dbReference>
<dbReference type="InterPro" id="IPR049740">
    <property type="entry name" value="CopZ"/>
</dbReference>
<dbReference type="InterPro" id="IPR017969">
    <property type="entry name" value="Heavy-metal-associated_CS"/>
</dbReference>
<dbReference type="InterPro" id="IPR006122">
    <property type="entry name" value="HMA_Cu_ion-bd"/>
</dbReference>
<dbReference type="InterPro" id="IPR006121">
    <property type="entry name" value="HMA_dom"/>
</dbReference>
<dbReference type="InterPro" id="IPR036163">
    <property type="entry name" value="HMA_dom_sf"/>
</dbReference>
<dbReference type="InterPro" id="IPR001802">
    <property type="entry name" value="MerP/CopZ"/>
</dbReference>
<dbReference type="NCBIfam" id="NF033795">
    <property type="entry name" value="chaper_CopZ_Bs"/>
    <property type="match status" value="1"/>
</dbReference>
<dbReference type="NCBIfam" id="TIGR00003">
    <property type="entry name" value="copper ion binding protein"/>
    <property type="match status" value="1"/>
</dbReference>
<dbReference type="PANTHER" id="PTHR46594">
    <property type="entry name" value="P-TYPE CATION-TRANSPORTING ATPASE"/>
    <property type="match status" value="1"/>
</dbReference>
<dbReference type="PANTHER" id="PTHR46594:SF4">
    <property type="entry name" value="P-TYPE CATION-TRANSPORTING ATPASE"/>
    <property type="match status" value="1"/>
</dbReference>
<dbReference type="Pfam" id="PF00403">
    <property type="entry name" value="HMA"/>
    <property type="match status" value="1"/>
</dbReference>
<dbReference type="PRINTS" id="PR00946">
    <property type="entry name" value="HGSCAVENGER"/>
</dbReference>
<dbReference type="SUPFAM" id="SSF55008">
    <property type="entry name" value="HMA, heavy metal-associated domain"/>
    <property type="match status" value="1"/>
</dbReference>
<dbReference type="PROSITE" id="PS01047">
    <property type="entry name" value="HMA_1"/>
    <property type="match status" value="1"/>
</dbReference>
<dbReference type="PROSITE" id="PS50846">
    <property type="entry name" value="HMA_2"/>
    <property type="match status" value="1"/>
</dbReference>
<proteinExistence type="inferred from homology"/>
<gene>
    <name type="primary">copZ</name>
    <name type="ordered locus">USA300HOU_2553</name>
</gene>
<organism>
    <name type="scientific">Staphylococcus aureus (strain USA300 / TCH1516)</name>
    <dbReference type="NCBI Taxonomy" id="451516"/>
    <lineage>
        <taxon>Bacteria</taxon>
        <taxon>Bacillati</taxon>
        <taxon>Bacillota</taxon>
        <taxon>Bacilli</taxon>
        <taxon>Bacillales</taxon>
        <taxon>Staphylococcaceae</taxon>
        <taxon>Staphylococcus</taxon>
    </lineage>
</organism>
<evidence type="ECO:0000250" key="1"/>
<evidence type="ECO:0000255" key="2">
    <source>
        <dbReference type="PROSITE-ProRule" id="PRU00280"/>
    </source>
</evidence>
<keyword id="KW-0143">Chaperone</keyword>
<keyword id="KW-0186">Copper</keyword>
<keyword id="KW-0963">Cytoplasm</keyword>
<keyword id="KW-0479">Metal-binding</keyword>
<feature type="chain" id="PRO_0000351282" description="Copper chaperone CopZ">
    <location>
        <begin position="1"/>
        <end position="68"/>
    </location>
</feature>
<feature type="domain" description="HMA" evidence="2">
    <location>
        <begin position="2"/>
        <end position="68"/>
    </location>
</feature>
<feature type="binding site" evidence="2">
    <location>
        <position position="13"/>
    </location>
    <ligand>
        <name>Cu cation</name>
        <dbReference type="ChEBI" id="CHEBI:23378"/>
    </ligand>
</feature>
<feature type="binding site" evidence="2">
    <location>
        <position position="16"/>
    </location>
    <ligand>
        <name>Cu cation</name>
        <dbReference type="ChEBI" id="CHEBI:23378"/>
    </ligand>
</feature>
<reference key="1">
    <citation type="journal article" date="2007" name="BMC Microbiol.">
        <title>Subtle genetic changes enhance virulence of methicillin resistant and sensitive Staphylococcus aureus.</title>
        <authorList>
            <person name="Highlander S.K."/>
            <person name="Hulten K.G."/>
            <person name="Qin X."/>
            <person name="Jiang H."/>
            <person name="Yerrapragada S."/>
            <person name="Mason E.O. Jr."/>
            <person name="Shang Y."/>
            <person name="Williams T.M."/>
            <person name="Fortunov R.M."/>
            <person name="Liu Y."/>
            <person name="Igboeli O."/>
            <person name="Petrosino J."/>
            <person name="Tirumalai M."/>
            <person name="Uzman A."/>
            <person name="Fox G.E."/>
            <person name="Cardenas A.M."/>
            <person name="Muzny D.M."/>
            <person name="Hemphill L."/>
            <person name="Ding Y."/>
            <person name="Dugan S."/>
            <person name="Blyth P.R."/>
            <person name="Buhay C.J."/>
            <person name="Dinh H.H."/>
            <person name="Hawes A.C."/>
            <person name="Holder M."/>
            <person name="Kovar C.L."/>
            <person name="Lee S.L."/>
            <person name="Liu W."/>
            <person name="Nazareth L.V."/>
            <person name="Wang Q."/>
            <person name="Zhou J."/>
            <person name="Kaplan S.L."/>
            <person name="Weinstock G.M."/>
        </authorList>
    </citation>
    <scope>NUCLEOTIDE SEQUENCE [LARGE SCALE GENOMIC DNA]</scope>
    <source>
        <strain>USA300 / TCH1516</strain>
    </source>
</reference>
<protein>
    <recommendedName>
        <fullName>Copper chaperone CopZ</fullName>
    </recommendedName>
</protein>
<comment type="function">
    <text evidence="1">Chaperone that serves for the intracellular sequestration and transport of Cu(+). Delivers Cu(+) to the copper-exporting P-type ATPase A (CopA) (By similarity).</text>
</comment>
<comment type="subcellular location">
    <subcellularLocation>
        <location evidence="1">Cytoplasm</location>
    </subcellularLocation>
</comment>
<name>COPZ_STAAT</name>